<evidence type="ECO:0000255" key="1">
    <source>
        <dbReference type="HAMAP-Rule" id="MF_01356"/>
    </source>
</evidence>
<evidence type="ECO:0000256" key="2">
    <source>
        <dbReference type="SAM" id="MobiDB-lite"/>
    </source>
</evidence>
<proteinExistence type="inferred from homology"/>
<comment type="function">
    <text evidence="1">NDH-1 shuttles electrons from NADH, via FMN and iron-sulfur (Fe-S) centers, to quinones in the respiratory chain. The immediate electron acceptor for the enzyme in this species is believed to be ubiquinone. Couples the redox reaction to proton translocation (for every two electrons transferred, four hydrogen ions are translocated across the cytoplasmic membrane), and thus conserves the redox energy in a proton gradient.</text>
</comment>
<comment type="catalytic activity">
    <reaction evidence="1">
        <text>a quinone + NADH + 5 H(+)(in) = a quinol + NAD(+) + 4 H(+)(out)</text>
        <dbReference type="Rhea" id="RHEA:57888"/>
        <dbReference type="ChEBI" id="CHEBI:15378"/>
        <dbReference type="ChEBI" id="CHEBI:24646"/>
        <dbReference type="ChEBI" id="CHEBI:57540"/>
        <dbReference type="ChEBI" id="CHEBI:57945"/>
        <dbReference type="ChEBI" id="CHEBI:132124"/>
    </reaction>
</comment>
<comment type="cofactor">
    <cofactor evidence="1">
        <name>[4Fe-4S] cluster</name>
        <dbReference type="ChEBI" id="CHEBI:49883"/>
    </cofactor>
    <text evidence="1">Binds 1 [4Fe-4S] cluster.</text>
</comment>
<comment type="subunit">
    <text evidence="1">NDH-1 is composed of 14 different subunits. Subunits NuoB, C, D, E, F, and G constitute the peripheral sector of the complex.</text>
</comment>
<comment type="subcellular location">
    <subcellularLocation>
        <location evidence="1">Cell inner membrane</location>
        <topology evidence="1">Peripheral membrane protein</topology>
        <orientation evidence="1">Cytoplasmic side</orientation>
    </subcellularLocation>
</comment>
<comment type="similarity">
    <text evidence="1">Belongs to the complex I 20 kDa subunit family.</text>
</comment>
<protein>
    <recommendedName>
        <fullName evidence="1">NADH-quinone oxidoreductase subunit B</fullName>
        <ecNumber evidence="1">7.1.1.-</ecNumber>
    </recommendedName>
    <alternativeName>
        <fullName evidence="1">NADH dehydrogenase I subunit B</fullName>
    </alternativeName>
    <alternativeName>
        <fullName evidence="1">NDH-1 subunit B</fullName>
    </alternativeName>
</protein>
<dbReference type="EC" id="7.1.1.-" evidence="1"/>
<dbReference type="EMBL" id="CP000082">
    <property type="protein sequence ID" value="AAZ18445.1"/>
    <property type="molecule type" value="Genomic_DNA"/>
</dbReference>
<dbReference type="RefSeq" id="WP_011279874.1">
    <property type="nucleotide sequence ID" value="NC_007204.1"/>
</dbReference>
<dbReference type="SMR" id="Q4FU63"/>
<dbReference type="STRING" id="259536.Psyc_0585"/>
<dbReference type="KEGG" id="par:Psyc_0585"/>
<dbReference type="eggNOG" id="COG0377">
    <property type="taxonomic scope" value="Bacteria"/>
</dbReference>
<dbReference type="HOGENOM" id="CLU_055737_7_3_6"/>
<dbReference type="OrthoDB" id="9786737at2"/>
<dbReference type="Proteomes" id="UP000000546">
    <property type="component" value="Chromosome"/>
</dbReference>
<dbReference type="GO" id="GO:0005886">
    <property type="term" value="C:plasma membrane"/>
    <property type="evidence" value="ECO:0007669"/>
    <property type="project" value="UniProtKB-SubCell"/>
</dbReference>
<dbReference type="GO" id="GO:0045271">
    <property type="term" value="C:respiratory chain complex I"/>
    <property type="evidence" value="ECO:0007669"/>
    <property type="project" value="TreeGrafter"/>
</dbReference>
<dbReference type="GO" id="GO:0051539">
    <property type="term" value="F:4 iron, 4 sulfur cluster binding"/>
    <property type="evidence" value="ECO:0007669"/>
    <property type="project" value="UniProtKB-KW"/>
</dbReference>
<dbReference type="GO" id="GO:0005506">
    <property type="term" value="F:iron ion binding"/>
    <property type="evidence" value="ECO:0007669"/>
    <property type="project" value="UniProtKB-UniRule"/>
</dbReference>
<dbReference type="GO" id="GO:0008137">
    <property type="term" value="F:NADH dehydrogenase (ubiquinone) activity"/>
    <property type="evidence" value="ECO:0007669"/>
    <property type="project" value="InterPro"/>
</dbReference>
<dbReference type="GO" id="GO:0050136">
    <property type="term" value="F:NADH:ubiquinone reductase (non-electrogenic) activity"/>
    <property type="evidence" value="ECO:0007669"/>
    <property type="project" value="UniProtKB-UniRule"/>
</dbReference>
<dbReference type="GO" id="GO:0048038">
    <property type="term" value="F:quinone binding"/>
    <property type="evidence" value="ECO:0007669"/>
    <property type="project" value="UniProtKB-KW"/>
</dbReference>
<dbReference type="GO" id="GO:0009060">
    <property type="term" value="P:aerobic respiration"/>
    <property type="evidence" value="ECO:0007669"/>
    <property type="project" value="TreeGrafter"/>
</dbReference>
<dbReference type="GO" id="GO:0015990">
    <property type="term" value="P:electron transport coupled proton transport"/>
    <property type="evidence" value="ECO:0007669"/>
    <property type="project" value="TreeGrafter"/>
</dbReference>
<dbReference type="FunFam" id="3.40.50.12280:FF:000002">
    <property type="entry name" value="NADH-quinone oxidoreductase subunit B"/>
    <property type="match status" value="1"/>
</dbReference>
<dbReference type="Gene3D" id="3.40.50.12280">
    <property type="match status" value="1"/>
</dbReference>
<dbReference type="HAMAP" id="MF_01356">
    <property type="entry name" value="NDH1_NuoB"/>
    <property type="match status" value="1"/>
</dbReference>
<dbReference type="InterPro" id="IPR006137">
    <property type="entry name" value="NADH_UbQ_OxRdtase-like_20kDa"/>
</dbReference>
<dbReference type="InterPro" id="IPR006138">
    <property type="entry name" value="NADH_UQ_OxRdtase_20Kd_su"/>
</dbReference>
<dbReference type="NCBIfam" id="TIGR01957">
    <property type="entry name" value="nuoB_fam"/>
    <property type="match status" value="1"/>
</dbReference>
<dbReference type="NCBIfam" id="NF005012">
    <property type="entry name" value="PRK06411.1"/>
    <property type="match status" value="1"/>
</dbReference>
<dbReference type="PANTHER" id="PTHR11995">
    <property type="entry name" value="NADH DEHYDROGENASE"/>
    <property type="match status" value="1"/>
</dbReference>
<dbReference type="PANTHER" id="PTHR11995:SF14">
    <property type="entry name" value="NADH DEHYDROGENASE [UBIQUINONE] IRON-SULFUR PROTEIN 7, MITOCHONDRIAL"/>
    <property type="match status" value="1"/>
</dbReference>
<dbReference type="Pfam" id="PF01058">
    <property type="entry name" value="Oxidored_q6"/>
    <property type="match status" value="1"/>
</dbReference>
<dbReference type="SUPFAM" id="SSF56770">
    <property type="entry name" value="HydA/Nqo6-like"/>
    <property type="match status" value="1"/>
</dbReference>
<dbReference type="PROSITE" id="PS01150">
    <property type="entry name" value="COMPLEX1_20K"/>
    <property type="match status" value="1"/>
</dbReference>
<name>NUOB_PSYA2</name>
<gene>
    <name evidence="1" type="primary">nuoB</name>
    <name type="ordered locus">Psyc_0585</name>
</gene>
<reference key="1">
    <citation type="journal article" date="2010" name="Appl. Environ. Microbiol.">
        <title>The genome sequence of Psychrobacter arcticus 273-4, a psychroactive Siberian permafrost bacterium, reveals mechanisms for adaptation to low-temperature growth.</title>
        <authorList>
            <person name="Ayala-del-Rio H.L."/>
            <person name="Chain P.S."/>
            <person name="Grzymski J.J."/>
            <person name="Ponder M.A."/>
            <person name="Ivanova N."/>
            <person name="Bergholz P.W."/>
            <person name="Di Bartolo G."/>
            <person name="Hauser L."/>
            <person name="Land M."/>
            <person name="Bakermans C."/>
            <person name="Rodrigues D."/>
            <person name="Klappenbach J."/>
            <person name="Zarka D."/>
            <person name="Larimer F."/>
            <person name="Richardson P."/>
            <person name="Murray A."/>
            <person name="Thomashow M."/>
            <person name="Tiedje J.M."/>
        </authorList>
    </citation>
    <scope>NUCLEOTIDE SEQUENCE [LARGE SCALE GENOMIC DNA]</scope>
    <source>
        <strain>DSM 17307 / VKM B-2377 / 273-4</strain>
    </source>
</reference>
<feature type="chain" id="PRO_0000376321" description="NADH-quinone oxidoreductase subunit B">
    <location>
        <begin position="1"/>
        <end position="222"/>
    </location>
</feature>
<feature type="region of interest" description="Disordered" evidence="2">
    <location>
        <begin position="200"/>
        <end position="222"/>
    </location>
</feature>
<feature type="compositionally biased region" description="Basic and acidic residues" evidence="2">
    <location>
        <begin position="201"/>
        <end position="212"/>
    </location>
</feature>
<feature type="binding site" evidence="1">
    <location>
        <position position="65"/>
    </location>
    <ligand>
        <name>[4Fe-4S] cluster</name>
        <dbReference type="ChEBI" id="CHEBI:49883"/>
    </ligand>
</feature>
<feature type="binding site" evidence="1">
    <location>
        <position position="66"/>
    </location>
    <ligand>
        <name>[4Fe-4S] cluster</name>
        <dbReference type="ChEBI" id="CHEBI:49883"/>
    </ligand>
</feature>
<feature type="binding site" evidence="1">
    <location>
        <position position="131"/>
    </location>
    <ligand>
        <name>[4Fe-4S] cluster</name>
        <dbReference type="ChEBI" id="CHEBI:49883"/>
    </ligand>
</feature>
<feature type="binding site" evidence="1">
    <location>
        <position position="160"/>
    </location>
    <ligand>
        <name>[4Fe-4S] cluster</name>
        <dbReference type="ChEBI" id="CHEBI:49883"/>
    </ligand>
</feature>
<sequence>MKYTLTKANPDADVYPAQTSQTVNDPMEDEVNKNVFMGRLEDLVHSTANWGRKHSLWPFNFGTSCCYVEYATTLTAVHDLSRFGAEVIRASPRQADVMIVAGTCFVKMAPVIQRLYEQMLEPKWVISMGACANSGGMYDIYSVVQGVDKIIPVDVYVPGCPPRPEALIQGLMLLQESITKERRPLGIHVNDQGIYQPQMTPERDRKQADRIAVKNLRSPDSI</sequence>
<accession>Q4FU63</accession>
<keyword id="KW-0004">4Fe-4S</keyword>
<keyword id="KW-0997">Cell inner membrane</keyword>
<keyword id="KW-1003">Cell membrane</keyword>
<keyword id="KW-0408">Iron</keyword>
<keyword id="KW-0411">Iron-sulfur</keyword>
<keyword id="KW-0472">Membrane</keyword>
<keyword id="KW-0479">Metal-binding</keyword>
<keyword id="KW-0520">NAD</keyword>
<keyword id="KW-0874">Quinone</keyword>
<keyword id="KW-1185">Reference proteome</keyword>
<keyword id="KW-1278">Translocase</keyword>
<keyword id="KW-0813">Transport</keyword>
<keyword id="KW-0830">Ubiquinone</keyword>
<organism>
    <name type="scientific">Psychrobacter arcticus (strain DSM 17307 / VKM B-2377 / 273-4)</name>
    <dbReference type="NCBI Taxonomy" id="259536"/>
    <lineage>
        <taxon>Bacteria</taxon>
        <taxon>Pseudomonadati</taxon>
        <taxon>Pseudomonadota</taxon>
        <taxon>Gammaproteobacteria</taxon>
        <taxon>Moraxellales</taxon>
        <taxon>Moraxellaceae</taxon>
        <taxon>Psychrobacter</taxon>
    </lineage>
</organism>